<organism>
    <name type="scientific">Yersinia pestis bv. Antiqua (strain Antiqua)</name>
    <dbReference type="NCBI Taxonomy" id="360102"/>
    <lineage>
        <taxon>Bacteria</taxon>
        <taxon>Pseudomonadati</taxon>
        <taxon>Pseudomonadota</taxon>
        <taxon>Gammaproteobacteria</taxon>
        <taxon>Enterobacterales</taxon>
        <taxon>Yersiniaceae</taxon>
        <taxon>Yersinia</taxon>
    </lineage>
</organism>
<dbReference type="EC" id="3.5.1.105" evidence="1"/>
<dbReference type="EMBL" id="CP000308">
    <property type="protein sequence ID" value="ABG14376.1"/>
    <property type="molecule type" value="Genomic_DNA"/>
</dbReference>
<dbReference type="RefSeq" id="WP_002212244.1">
    <property type="nucleotide sequence ID" value="NZ_CP009906.1"/>
</dbReference>
<dbReference type="SMR" id="Q1C596"/>
<dbReference type="GeneID" id="57976011"/>
<dbReference type="KEGG" id="ypa:YPA_2411"/>
<dbReference type="UniPathway" id="UPA00349"/>
<dbReference type="Proteomes" id="UP000001971">
    <property type="component" value="Chromosome"/>
</dbReference>
<dbReference type="GO" id="GO:0005737">
    <property type="term" value="C:cytoplasm"/>
    <property type="evidence" value="ECO:0007669"/>
    <property type="project" value="UniProtKB-SubCell"/>
</dbReference>
<dbReference type="GO" id="GO:0036311">
    <property type="term" value="F:chitin disaccharide deacetylase activity"/>
    <property type="evidence" value="ECO:0007669"/>
    <property type="project" value="UniProtKB-UniRule"/>
</dbReference>
<dbReference type="GO" id="GO:0019213">
    <property type="term" value="F:deacetylase activity"/>
    <property type="evidence" value="ECO:0007669"/>
    <property type="project" value="TreeGrafter"/>
</dbReference>
<dbReference type="GO" id="GO:0046872">
    <property type="term" value="F:metal ion binding"/>
    <property type="evidence" value="ECO:0007669"/>
    <property type="project" value="UniProtKB-KW"/>
</dbReference>
<dbReference type="GO" id="GO:0006032">
    <property type="term" value="P:chitin catabolic process"/>
    <property type="evidence" value="ECO:0007669"/>
    <property type="project" value="UniProtKB-UniPathway"/>
</dbReference>
<dbReference type="GO" id="GO:0052777">
    <property type="term" value="P:diacetylchitobiose catabolic process"/>
    <property type="evidence" value="ECO:0007669"/>
    <property type="project" value="UniProtKB-UniRule"/>
</dbReference>
<dbReference type="GO" id="GO:0000272">
    <property type="term" value="P:polysaccharide catabolic process"/>
    <property type="evidence" value="ECO:0007669"/>
    <property type="project" value="UniProtKB-UniRule"/>
</dbReference>
<dbReference type="CDD" id="cd10803">
    <property type="entry name" value="YdjC_EF3048_like"/>
    <property type="match status" value="1"/>
</dbReference>
<dbReference type="FunFam" id="3.20.20.370:FF:000001">
    <property type="entry name" value="Chitooligosaccharide deacetylase"/>
    <property type="match status" value="1"/>
</dbReference>
<dbReference type="Gene3D" id="3.20.20.370">
    <property type="entry name" value="Glycoside hydrolase/deacetylase"/>
    <property type="match status" value="1"/>
</dbReference>
<dbReference type="HAMAP" id="MF_01246">
    <property type="entry name" value="COD"/>
    <property type="match status" value="1"/>
</dbReference>
<dbReference type="InterPro" id="IPR022948">
    <property type="entry name" value="COD_ChbG_bac"/>
</dbReference>
<dbReference type="InterPro" id="IPR011330">
    <property type="entry name" value="Glyco_hydro/deAcase_b/a-brl"/>
</dbReference>
<dbReference type="InterPro" id="IPR006879">
    <property type="entry name" value="YdjC-like"/>
</dbReference>
<dbReference type="NCBIfam" id="NF002559">
    <property type="entry name" value="PRK02134.1"/>
    <property type="match status" value="1"/>
</dbReference>
<dbReference type="PANTHER" id="PTHR31609:SF1">
    <property type="entry name" value="CARBOHYDRATE DEACETYLASE"/>
    <property type="match status" value="1"/>
</dbReference>
<dbReference type="PANTHER" id="PTHR31609">
    <property type="entry name" value="YDJC DEACETYLASE FAMILY MEMBER"/>
    <property type="match status" value="1"/>
</dbReference>
<dbReference type="Pfam" id="PF04794">
    <property type="entry name" value="YdjC"/>
    <property type="match status" value="1"/>
</dbReference>
<dbReference type="SUPFAM" id="SSF88713">
    <property type="entry name" value="Glycoside hydrolase/deacetylase"/>
    <property type="match status" value="1"/>
</dbReference>
<proteinExistence type="inferred from homology"/>
<sequence>MEKLLIVNADDFGLCKGQNYGIIDAFRNGVVSSTTAMMNSVDINHAAELSAQYPALPVGMHFVLTFGRPLTAMPSLTDANGELGKWLWQRAGAGTLDLNEIAQELECQFERFSAVFGRPPTHIDSHHHVHMLPQIYPLVAAFAREKSLPLRIDRHEVQQHGLTLDNPRSSEWFNAGFYGENLSEPSFLQLLEHADQQGVNSLEIMCHPAFIDQTLMTSGYCYPRLTELAILTSPTLKPAIAQRGYRLGSFLDC</sequence>
<gene>
    <name evidence="1" type="primary">chbG</name>
    <name type="ordered locus">YPA_2411</name>
</gene>
<comment type="function">
    <text evidence="1">Involved in the degradation of chitin. ChbG is essential for growth on the acetylated chitooligosaccharides chitobiose and chitotriose but is dispensable for growth on cellobiose and chitosan dimer, the deacetylated form of chitobiose. Deacetylation of chitobiose-6-P and chitotriose-6-P is necessary for both the activation of the chb promoter by the regulatory protein ChbR and the hydrolysis of phosphorylated beta-glucosides by the phospho-beta-glucosidase ChbF. Catalyzes the removal of only one acetyl group from chitobiose-6-P to yield monoacetylchitobiose-6-P, the inducer of ChbR and the substrate of ChbF.</text>
</comment>
<comment type="catalytic activity">
    <reaction evidence="1">
        <text>N,N'-diacetylchitobiose + H2O = N-acetyl-beta-D-glucosaminyl-(1-&gt;4)-D-glucosamine + acetate</text>
        <dbReference type="Rhea" id="RHEA:27469"/>
        <dbReference type="ChEBI" id="CHEBI:15377"/>
        <dbReference type="ChEBI" id="CHEBI:28681"/>
        <dbReference type="ChEBI" id="CHEBI:30089"/>
        <dbReference type="ChEBI" id="CHEBI:59910"/>
        <dbReference type="EC" id="3.5.1.105"/>
    </reaction>
</comment>
<comment type="catalytic activity">
    <reaction evidence="1">
        <text>diacetylchitobiose-6'-phosphate + H2O = N'-monoacetylchitobiose-6'-phosphate + acetate</text>
        <dbReference type="Rhea" id="RHEA:35083"/>
        <dbReference type="ChEBI" id="CHEBI:15377"/>
        <dbReference type="ChEBI" id="CHEBI:30089"/>
        <dbReference type="ChEBI" id="CHEBI:64883"/>
        <dbReference type="ChEBI" id="CHEBI:71315"/>
    </reaction>
</comment>
<comment type="cofactor">
    <cofactor evidence="1">
        <name>Mg(2+)</name>
        <dbReference type="ChEBI" id="CHEBI:18420"/>
    </cofactor>
</comment>
<comment type="pathway">
    <text evidence="1">Glycan degradation; chitin degradation.</text>
</comment>
<comment type="subunit">
    <text evidence="1">Homodimer.</text>
</comment>
<comment type="subcellular location">
    <subcellularLocation>
        <location evidence="1">Cytoplasm</location>
    </subcellularLocation>
</comment>
<comment type="similarity">
    <text evidence="1">Belongs to the YdjC deacetylase family. ChbG subfamily.</text>
</comment>
<reference key="1">
    <citation type="journal article" date="2006" name="J. Bacteriol.">
        <title>Complete genome sequence of Yersinia pestis strains Antiqua and Nepal516: evidence of gene reduction in an emerging pathogen.</title>
        <authorList>
            <person name="Chain P.S.G."/>
            <person name="Hu P."/>
            <person name="Malfatti S.A."/>
            <person name="Radnedge L."/>
            <person name="Larimer F."/>
            <person name="Vergez L.M."/>
            <person name="Worsham P."/>
            <person name="Chu M.C."/>
            <person name="Andersen G.L."/>
        </authorList>
    </citation>
    <scope>NUCLEOTIDE SEQUENCE [LARGE SCALE GENOMIC DNA]</scope>
    <source>
        <strain>Antiqua</strain>
    </source>
</reference>
<accession>Q1C596</accession>
<feature type="chain" id="PRO_1000067093" description="Chitooligosaccharide deacetylase">
    <location>
        <begin position="1"/>
        <end position="253"/>
    </location>
</feature>
<feature type="binding site" evidence="1">
    <location>
        <position position="61"/>
    </location>
    <ligand>
        <name>Mg(2+)</name>
        <dbReference type="ChEBI" id="CHEBI:18420"/>
    </ligand>
</feature>
<feature type="binding site" evidence="1">
    <location>
        <position position="126"/>
    </location>
    <ligand>
        <name>Mg(2+)</name>
        <dbReference type="ChEBI" id="CHEBI:18420"/>
    </ligand>
</feature>
<keyword id="KW-0119">Carbohydrate metabolism</keyword>
<keyword id="KW-0146">Chitin degradation</keyword>
<keyword id="KW-0963">Cytoplasm</keyword>
<keyword id="KW-0378">Hydrolase</keyword>
<keyword id="KW-0460">Magnesium</keyword>
<keyword id="KW-0479">Metal-binding</keyword>
<keyword id="KW-0624">Polysaccharide degradation</keyword>
<protein>
    <recommendedName>
        <fullName evidence="1">Chitooligosaccharide deacetylase</fullName>
        <shortName evidence="1">COD</shortName>
        <ecNumber evidence="1">3.5.1.105</ecNumber>
    </recommendedName>
    <alternativeName>
        <fullName evidence="1">Chitin disaccharide deacetylase</fullName>
    </alternativeName>
    <alternativeName>
        <fullName evidence="1">Chitobiose deacetylase</fullName>
    </alternativeName>
    <alternativeName>
        <fullName evidence="1">Chitobiose-6P deacetylase</fullName>
    </alternativeName>
    <alternativeName>
        <fullName evidence="1">Chitotriose deacetylase</fullName>
    </alternativeName>
    <alternativeName>
        <fullName evidence="1">Chitotriose-6P deacetylase</fullName>
    </alternativeName>
</protein>
<name>CHBG_YERPA</name>
<evidence type="ECO:0000255" key="1">
    <source>
        <dbReference type="HAMAP-Rule" id="MF_01246"/>
    </source>
</evidence>